<proteinExistence type="evidence at protein level"/>
<gene>
    <name evidence="5" type="primary">ypkA</name>
    <name type="ORF">AFUA_2G10620</name>
</gene>
<comment type="function">
    <text evidence="4">Serine/threonine protein kinase required for vegetative growth and conidiation (PubMed:30692984). Important for fungal survival through the regulation of glycosphingolipid (GSL) biosynthesis and cross talks with MAP kinase pathways such as the cell wall integrity (CWI) and the high osmolarity glycerol (HOG) pathways (PubMed:30692984).</text>
</comment>
<comment type="catalytic activity">
    <reaction evidence="6">
        <text>L-seryl-[protein] + ATP = O-phospho-L-seryl-[protein] + ADP + H(+)</text>
        <dbReference type="Rhea" id="RHEA:17989"/>
        <dbReference type="Rhea" id="RHEA-COMP:9863"/>
        <dbReference type="Rhea" id="RHEA-COMP:11604"/>
        <dbReference type="ChEBI" id="CHEBI:15378"/>
        <dbReference type="ChEBI" id="CHEBI:29999"/>
        <dbReference type="ChEBI" id="CHEBI:30616"/>
        <dbReference type="ChEBI" id="CHEBI:83421"/>
        <dbReference type="ChEBI" id="CHEBI:456216"/>
        <dbReference type="EC" id="2.7.11.1"/>
    </reaction>
</comment>
<comment type="catalytic activity">
    <reaction evidence="6">
        <text>L-threonyl-[protein] + ATP = O-phospho-L-threonyl-[protein] + ADP + H(+)</text>
        <dbReference type="Rhea" id="RHEA:46608"/>
        <dbReference type="Rhea" id="RHEA-COMP:11060"/>
        <dbReference type="Rhea" id="RHEA-COMP:11605"/>
        <dbReference type="ChEBI" id="CHEBI:15378"/>
        <dbReference type="ChEBI" id="CHEBI:30013"/>
        <dbReference type="ChEBI" id="CHEBI:30616"/>
        <dbReference type="ChEBI" id="CHEBI:61977"/>
        <dbReference type="ChEBI" id="CHEBI:456216"/>
        <dbReference type="EC" id="2.7.11.1"/>
    </reaction>
</comment>
<comment type="subunit">
    <text evidence="4">Interacts with the sakA MAP kinase.</text>
</comment>
<comment type="disruption phenotype">
    <text evidence="4">Leads to abnormal hyphae growth and impairs the production of conidiophores and asexual reproductive associated structures (PubMed:30692984). Resusts in thermosensitivity (PubMed:30692984). Leads to an increase in ergosterol content and a significant decrease in glycosphingolipid (GSL) levels, especially the metabolic intermediates belonging to the neutral GSL branch including dihydroceramide (DHC), ceramide (Cer), and glucosylceramide (GlcCer) (PubMed:30692984).</text>
</comment>
<comment type="similarity">
    <text evidence="6">Belongs to the protein kinase superfamily. Ser/Thr protein kinase family.</text>
</comment>
<protein>
    <recommendedName>
        <fullName evidence="5">Serine/threonine protein kinase ypkA</fullName>
        <ecNumber evidence="6">2.7.11.1</ecNumber>
    </recommendedName>
    <alternativeName>
        <fullName evidence="5">AGC kinase ypkA</fullName>
    </alternativeName>
</protein>
<organism>
    <name type="scientific">Aspergillus fumigatus (strain ATCC MYA-4609 / CBS 101355 / FGSC A1100 / Af293)</name>
    <name type="common">Neosartorya fumigata</name>
    <dbReference type="NCBI Taxonomy" id="330879"/>
    <lineage>
        <taxon>Eukaryota</taxon>
        <taxon>Fungi</taxon>
        <taxon>Dikarya</taxon>
        <taxon>Ascomycota</taxon>
        <taxon>Pezizomycotina</taxon>
        <taxon>Eurotiomycetes</taxon>
        <taxon>Eurotiomycetidae</taxon>
        <taxon>Eurotiales</taxon>
        <taxon>Aspergillaceae</taxon>
        <taxon>Aspergillus</taxon>
        <taxon>Aspergillus subgen. Fumigati</taxon>
    </lineage>
</organism>
<name>YPKA_ASPFU</name>
<dbReference type="EC" id="2.7.11.1" evidence="6"/>
<dbReference type="EMBL" id="AAHF01000001">
    <property type="protein sequence ID" value="EAL93357.1"/>
    <property type="molecule type" value="Genomic_DNA"/>
</dbReference>
<dbReference type="RefSeq" id="XP_755395.1">
    <property type="nucleotide sequence ID" value="XM_750302.1"/>
</dbReference>
<dbReference type="SMR" id="Q4X1A8"/>
<dbReference type="FunCoup" id="Q4X1A8">
    <property type="interactions" value="284"/>
</dbReference>
<dbReference type="STRING" id="330879.Q4X1A8"/>
<dbReference type="EnsemblFungi" id="EAL93357">
    <property type="protein sequence ID" value="EAL93357"/>
    <property type="gene ID" value="AFUA_2G10620"/>
</dbReference>
<dbReference type="GeneID" id="3513683"/>
<dbReference type="KEGG" id="afm:AFUA_2G10620"/>
<dbReference type="VEuPathDB" id="FungiDB:Afu2g10620"/>
<dbReference type="eggNOG" id="KOG0598">
    <property type="taxonomic scope" value="Eukaryota"/>
</dbReference>
<dbReference type="HOGENOM" id="CLU_000288_120_0_1"/>
<dbReference type="InParanoid" id="Q4X1A8"/>
<dbReference type="OMA" id="YLVMEFE"/>
<dbReference type="OrthoDB" id="63267at2759"/>
<dbReference type="Proteomes" id="UP000002530">
    <property type="component" value="Chromosome 2"/>
</dbReference>
<dbReference type="GO" id="GO:0000785">
    <property type="term" value="C:chromatin"/>
    <property type="evidence" value="ECO:0007669"/>
    <property type="project" value="EnsemblFungi"/>
</dbReference>
<dbReference type="GO" id="GO:0005737">
    <property type="term" value="C:cytoplasm"/>
    <property type="evidence" value="ECO:0000318"/>
    <property type="project" value="GO_Central"/>
</dbReference>
<dbReference type="GO" id="GO:0005634">
    <property type="term" value="C:nucleus"/>
    <property type="evidence" value="ECO:0000318"/>
    <property type="project" value="GO_Central"/>
</dbReference>
<dbReference type="GO" id="GO:0005524">
    <property type="term" value="F:ATP binding"/>
    <property type="evidence" value="ECO:0007669"/>
    <property type="project" value="UniProtKB-KW"/>
</dbReference>
<dbReference type="GO" id="GO:0106310">
    <property type="term" value="F:protein serine kinase activity"/>
    <property type="evidence" value="ECO:0007669"/>
    <property type="project" value="RHEA"/>
</dbReference>
<dbReference type="GO" id="GO:0004674">
    <property type="term" value="F:protein serine/threonine kinase activity"/>
    <property type="evidence" value="ECO:0000318"/>
    <property type="project" value="GO_Central"/>
</dbReference>
<dbReference type="GO" id="GO:1903940">
    <property type="term" value="P:negative regulation of TORC2 signaling"/>
    <property type="evidence" value="ECO:0007669"/>
    <property type="project" value="EnsemblFungi"/>
</dbReference>
<dbReference type="GO" id="GO:1900237">
    <property type="term" value="P:positive regulation of induction of conjugation with cellular fusion"/>
    <property type="evidence" value="ECO:0007669"/>
    <property type="project" value="EnsemblFungi"/>
</dbReference>
<dbReference type="GO" id="GO:0045944">
    <property type="term" value="P:positive regulation of transcription by RNA polymerase II"/>
    <property type="evidence" value="ECO:0007669"/>
    <property type="project" value="EnsemblFungi"/>
</dbReference>
<dbReference type="CDD" id="cd11651">
    <property type="entry name" value="YPK1_N_like"/>
    <property type="match status" value="1"/>
</dbReference>
<dbReference type="FunFam" id="1.10.510.10:FF:000008">
    <property type="entry name" value="Non-specific serine/threonine protein kinase"/>
    <property type="match status" value="1"/>
</dbReference>
<dbReference type="FunFam" id="3.30.200.20:FF:000048">
    <property type="entry name" value="Non-specific serine/threonine protein kinase"/>
    <property type="match status" value="1"/>
</dbReference>
<dbReference type="Gene3D" id="3.30.200.20">
    <property type="entry name" value="Phosphorylase Kinase, domain 1"/>
    <property type="match status" value="1"/>
</dbReference>
<dbReference type="Gene3D" id="1.10.510.10">
    <property type="entry name" value="Transferase(Phosphotransferase) domain 1"/>
    <property type="match status" value="1"/>
</dbReference>
<dbReference type="InterPro" id="IPR000961">
    <property type="entry name" value="AGC-kinase_C"/>
</dbReference>
<dbReference type="InterPro" id="IPR011009">
    <property type="entry name" value="Kinase-like_dom_sf"/>
</dbReference>
<dbReference type="InterPro" id="IPR017892">
    <property type="entry name" value="Pkinase_C"/>
</dbReference>
<dbReference type="InterPro" id="IPR000719">
    <property type="entry name" value="Prot_kinase_dom"/>
</dbReference>
<dbReference type="InterPro" id="IPR017441">
    <property type="entry name" value="Protein_kinase_ATP_BS"/>
</dbReference>
<dbReference type="InterPro" id="IPR008271">
    <property type="entry name" value="Ser/Thr_kinase_AS"/>
</dbReference>
<dbReference type="PANTHER" id="PTHR24351">
    <property type="entry name" value="RIBOSOMAL PROTEIN S6 KINASE"/>
    <property type="match status" value="1"/>
</dbReference>
<dbReference type="Pfam" id="PF00069">
    <property type="entry name" value="Pkinase"/>
    <property type="match status" value="1"/>
</dbReference>
<dbReference type="Pfam" id="PF00433">
    <property type="entry name" value="Pkinase_C"/>
    <property type="match status" value="1"/>
</dbReference>
<dbReference type="SMART" id="SM00133">
    <property type="entry name" value="S_TK_X"/>
    <property type="match status" value="1"/>
</dbReference>
<dbReference type="SMART" id="SM00220">
    <property type="entry name" value="S_TKc"/>
    <property type="match status" value="1"/>
</dbReference>
<dbReference type="SUPFAM" id="SSF56112">
    <property type="entry name" value="Protein kinase-like (PK-like)"/>
    <property type="match status" value="1"/>
</dbReference>
<dbReference type="PROSITE" id="PS51285">
    <property type="entry name" value="AGC_KINASE_CTER"/>
    <property type="match status" value="1"/>
</dbReference>
<dbReference type="PROSITE" id="PS00107">
    <property type="entry name" value="PROTEIN_KINASE_ATP"/>
    <property type="match status" value="1"/>
</dbReference>
<dbReference type="PROSITE" id="PS50011">
    <property type="entry name" value="PROTEIN_KINASE_DOM"/>
    <property type="match status" value="1"/>
</dbReference>
<dbReference type="PROSITE" id="PS00108">
    <property type="entry name" value="PROTEIN_KINASE_ST"/>
    <property type="match status" value="1"/>
</dbReference>
<accession>Q4X1A8</accession>
<feature type="chain" id="PRO_0000460447" description="Serine/threonine protein kinase ypkA">
    <location>
        <begin position="1"/>
        <end position="637"/>
    </location>
</feature>
<feature type="domain" description="Protein kinase" evidence="1">
    <location>
        <begin position="294"/>
        <end position="551"/>
    </location>
</feature>
<feature type="domain" description="AGC-kinase C-terminal" evidence="2">
    <location>
        <begin position="552"/>
        <end position="623"/>
    </location>
</feature>
<feature type="region of interest" description="Disordered" evidence="3">
    <location>
        <begin position="20"/>
        <end position="63"/>
    </location>
</feature>
<feature type="region of interest" description="Disordered" evidence="3">
    <location>
        <begin position="104"/>
        <end position="140"/>
    </location>
</feature>
<feature type="compositionally biased region" description="Low complexity" evidence="3">
    <location>
        <begin position="20"/>
        <end position="29"/>
    </location>
</feature>
<feature type="compositionally biased region" description="Polar residues" evidence="3">
    <location>
        <begin position="40"/>
        <end position="61"/>
    </location>
</feature>
<feature type="compositionally biased region" description="Low complexity" evidence="3">
    <location>
        <begin position="104"/>
        <end position="116"/>
    </location>
</feature>
<feature type="compositionally biased region" description="Polar residues" evidence="3">
    <location>
        <begin position="117"/>
        <end position="136"/>
    </location>
</feature>
<feature type="active site" description="Proton acceptor" evidence="1">
    <location>
        <position position="417"/>
    </location>
</feature>
<feature type="binding site" evidence="1">
    <location>
        <begin position="300"/>
        <end position="308"/>
    </location>
    <ligand>
        <name>ATP</name>
        <dbReference type="ChEBI" id="CHEBI:30616"/>
    </ligand>
</feature>
<feature type="binding site" evidence="1">
    <location>
        <position position="323"/>
    </location>
    <ligand>
        <name>ATP</name>
        <dbReference type="ChEBI" id="CHEBI:30616"/>
    </ligand>
</feature>
<feature type="modified residue" description="Phosphoserine" evidence="2">
    <location>
        <position position="593"/>
    </location>
</feature>
<feature type="modified residue" description="Phosphoserine" evidence="2">
    <location>
        <position position="612"/>
    </location>
</feature>
<feature type="modified residue" description="Phosphotyrosine" evidence="2">
    <location>
        <position position="613"/>
    </location>
</feature>
<evidence type="ECO:0000255" key="1">
    <source>
        <dbReference type="PROSITE-ProRule" id="PRU00159"/>
    </source>
</evidence>
<evidence type="ECO:0000255" key="2">
    <source>
        <dbReference type="PROSITE-ProRule" id="PRU00618"/>
    </source>
</evidence>
<evidence type="ECO:0000256" key="3">
    <source>
        <dbReference type="SAM" id="MobiDB-lite"/>
    </source>
</evidence>
<evidence type="ECO:0000269" key="4">
    <source>
    </source>
</evidence>
<evidence type="ECO:0000303" key="5">
    <source>
    </source>
</evidence>
<evidence type="ECO:0000305" key="6"/>
<keyword id="KW-0067">ATP-binding</keyword>
<keyword id="KW-0418">Kinase</keyword>
<keyword id="KW-0547">Nucleotide-binding</keyword>
<keyword id="KW-0597">Phosphoprotein</keyword>
<keyword id="KW-1185">Reference proteome</keyword>
<keyword id="KW-0723">Serine/threonine-protein kinase</keyword>
<keyword id="KW-0808">Transferase</keyword>
<sequence>MSWKLTKKLKDTHLAPLTNTFTRSSSTSTIKNESGEETPVVSQTPSISSTNSNGINASESLVSPPVDPVKPGILIVTLHEGRGFALSPHFQQVFTSHFQNNNYSSSVRPSSSSSHSTHGQTASFAQSGRPQSTSGGINAAPTIHGRYSTKYLPYALLDFEKNQVFVDAVSGTPENPLWAGDNTAFKFDVSRKTELNVQLYLRNPSARPGAGRSEDIFLGAVRVLPRFEEAQPYVDDPKLSKKDNQKAAAAHANNERHLGQLGAEWLDLQFGTGSIKIGVSFVENKQRSLKLEDFDLLKVVGKGSFGKVMQVMKKDTGRIYALKTIRKAHIISRSEVTHTLAERSVLAQINNPFIVPLKFSFQSPEKLYLVLAFVNGGELFHHLQREQRFDINRARFYTAELLCALECLHGFKVIYRDLKPENILLDYTGHIALCDFGLCKLDMKDEDRTNTFCGTPEYLAPELLLGNGYTKTVDWWTLGVLLYEMLTGLPPFYDENTNDMYRKILQEPLTFPSSDIVPPAARDLLTRLLDRDPQRRLGANGAAEIKSHHFFANIDWRKLLQRKYEPSFRPNVMGASDTTNFDTEFTSEAPQDSYVDGPVLSQTMQQQFAGWSYNRPVAGLGDAGGSVKDPSFGSIPE</sequence>
<reference key="1">
    <citation type="journal article" date="2005" name="Nature">
        <title>Genomic sequence of the pathogenic and allergenic filamentous fungus Aspergillus fumigatus.</title>
        <authorList>
            <person name="Nierman W.C."/>
            <person name="Pain A."/>
            <person name="Anderson M.J."/>
            <person name="Wortman J.R."/>
            <person name="Kim H.S."/>
            <person name="Arroyo J."/>
            <person name="Berriman M."/>
            <person name="Abe K."/>
            <person name="Archer D.B."/>
            <person name="Bermejo C."/>
            <person name="Bennett J.W."/>
            <person name="Bowyer P."/>
            <person name="Chen D."/>
            <person name="Collins M."/>
            <person name="Coulsen R."/>
            <person name="Davies R."/>
            <person name="Dyer P.S."/>
            <person name="Farman M.L."/>
            <person name="Fedorova N."/>
            <person name="Fedorova N.D."/>
            <person name="Feldblyum T.V."/>
            <person name="Fischer R."/>
            <person name="Fosker N."/>
            <person name="Fraser A."/>
            <person name="Garcia J.L."/>
            <person name="Garcia M.J."/>
            <person name="Goble A."/>
            <person name="Goldman G.H."/>
            <person name="Gomi K."/>
            <person name="Griffith-Jones S."/>
            <person name="Gwilliam R."/>
            <person name="Haas B.J."/>
            <person name="Haas H."/>
            <person name="Harris D.E."/>
            <person name="Horiuchi H."/>
            <person name="Huang J."/>
            <person name="Humphray S."/>
            <person name="Jimenez J."/>
            <person name="Keller N."/>
            <person name="Khouri H."/>
            <person name="Kitamoto K."/>
            <person name="Kobayashi T."/>
            <person name="Konzack S."/>
            <person name="Kulkarni R."/>
            <person name="Kumagai T."/>
            <person name="Lafton A."/>
            <person name="Latge J.-P."/>
            <person name="Li W."/>
            <person name="Lord A."/>
            <person name="Lu C."/>
            <person name="Majoros W.H."/>
            <person name="May G.S."/>
            <person name="Miller B.L."/>
            <person name="Mohamoud Y."/>
            <person name="Molina M."/>
            <person name="Monod M."/>
            <person name="Mouyna I."/>
            <person name="Mulligan S."/>
            <person name="Murphy L.D."/>
            <person name="O'Neil S."/>
            <person name="Paulsen I."/>
            <person name="Penalva M.A."/>
            <person name="Pertea M."/>
            <person name="Price C."/>
            <person name="Pritchard B.L."/>
            <person name="Quail M.A."/>
            <person name="Rabbinowitsch E."/>
            <person name="Rawlins N."/>
            <person name="Rajandream M.A."/>
            <person name="Reichard U."/>
            <person name="Renauld H."/>
            <person name="Robson G.D."/>
            <person name="Rodriguez de Cordoba S."/>
            <person name="Rodriguez-Pena J.M."/>
            <person name="Ronning C.M."/>
            <person name="Rutter S."/>
            <person name="Salzberg S.L."/>
            <person name="Sanchez M."/>
            <person name="Sanchez-Ferrero J.C."/>
            <person name="Saunders D."/>
            <person name="Seeger K."/>
            <person name="Squares R."/>
            <person name="Squares S."/>
            <person name="Takeuchi M."/>
            <person name="Tekaia F."/>
            <person name="Turner G."/>
            <person name="Vazquez de Aldana C.R."/>
            <person name="Weidman J."/>
            <person name="White O."/>
            <person name="Woodward J.R."/>
            <person name="Yu J.-H."/>
            <person name="Fraser C.M."/>
            <person name="Galagan J.E."/>
            <person name="Asai K."/>
            <person name="Machida M."/>
            <person name="Hall N."/>
            <person name="Barrell B.G."/>
            <person name="Denning D.W."/>
        </authorList>
    </citation>
    <scope>NUCLEOTIDE SEQUENCE [LARGE SCALE GENOMIC DNA]</scope>
    <source>
        <strain>ATCC MYA-4609 / CBS 101355 / FGSC A1100 / Af293</strain>
    </source>
</reference>
<reference key="2">
    <citation type="journal article" date="2018" name="Front. Microbiol.">
        <title>The AGC Kinase YpkA Regulates Sphingolipids Biosynthesis and Physically Interacts With SakA MAP Kinase in Aspergillus fumigatus.</title>
        <authorList>
            <person name="Fabri J.H.T.M."/>
            <person name="Godoy N.L."/>
            <person name="Rocha M.C."/>
            <person name="Munshi M."/>
            <person name="Cocio T.A."/>
            <person name="von Zeska Kress M.R."/>
            <person name="Fill T.P."/>
            <person name="da Cunha A.F."/>
            <person name="Del Poeta M."/>
            <person name="Malavazi I."/>
        </authorList>
    </citation>
    <scope>FUNCTION</scope>
    <scope>DISRUPTION PHENOTYPE</scope>
    <scope>INTERACTION WITH SAKA</scope>
</reference>